<gene>
    <name evidence="1" type="primary">rnp1</name>
    <name type="ordered locus">AF_1917</name>
</gene>
<dbReference type="EC" id="3.1.26.5" evidence="1"/>
<dbReference type="EMBL" id="AE000782">
    <property type="protein sequence ID" value="AAB89336.1"/>
    <property type="molecule type" value="Genomic_DNA"/>
</dbReference>
<dbReference type="PIR" id="D69489">
    <property type="entry name" value="D69489"/>
</dbReference>
<dbReference type="RefSeq" id="WP_010879410.1">
    <property type="nucleotide sequence ID" value="NC_000917.1"/>
</dbReference>
<dbReference type="PDB" id="1PC0">
    <property type="method" value="NMR"/>
    <property type="chains" value="A=17-77"/>
</dbReference>
<dbReference type="PDB" id="1TS9">
    <property type="method" value="X-ray"/>
    <property type="resolution" value="1.70 A"/>
    <property type="chains" value="A=1-102"/>
</dbReference>
<dbReference type="PDB" id="1TSF">
    <property type="method" value="X-ray"/>
    <property type="resolution" value="1.70 A"/>
    <property type="chains" value="A=1-102"/>
</dbReference>
<dbReference type="PDBsum" id="1PC0"/>
<dbReference type="PDBsum" id="1TS9"/>
<dbReference type="PDBsum" id="1TSF"/>
<dbReference type="BMRB" id="O28362"/>
<dbReference type="SMR" id="O28362"/>
<dbReference type="STRING" id="224325.AF_1917"/>
<dbReference type="PaxDb" id="224325-AF_1917"/>
<dbReference type="EnsemblBacteria" id="AAB89336">
    <property type="protein sequence ID" value="AAB89336"/>
    <property type="gene ID" value="AF_1917"/>
</dbReference>
<dbReference type="GeneID" id="24795661"/>
<dbReference type="KEGG" id="afu:AF_1917"/>
<dbReference type="eggNOG" id="arCOG00784">
    <property type="taxonomic scope" value="Archaea"/>
</dbReference>
<dbReference type="HOGENOM" id="CLU_107020_2_1_2"/>
<dbReference type="OrthoDB" id="39019at2157"/>
<dbReference type="PhylomeDB" id="O28362"/>
<dbReference type="BRENDA" id="3.1.26.5">
    <property type="organism ID" value="414"/>
</dbReference>
<dbReference type="EvolutionaryTrace" id="O28362"/>
<dbReference type="Proteomes" id="UP000002199">
    <property type="component" value="Chromosome"/>
</dbReference>
<dbReference type="GO" id="GO:0005737">
    <property type="term" value="C:cytoplasm"/>
    <property type="evidence" value="ECO:0007669"/>
    <property type="project" value="UniProtKB-SubCell"/>
</dbReference>
<dbReference type="GO" id="GO:0000172">
    <property type="term" value="C:ribonuclease MRP complex"/>
    <property type="evidence" value="ECO:0007669"/>
    <property type="project" value="InterPro"/>
</dbReference>
<dbReference type="GO" id="GO:0030677">
    <property type="term" value="C:ribonuclease P complex"/>
    <property type="evidence" value="ECO:0007669"/>
    <property type="project" value="UniProtKB-UniRule"/>
</dbReference>
<dbReference type="GO" id="GO:0004526">
    <property type="term" value="F:ribonuclease P activity"/>
    <property type="evidence" value="ECO:0007669"/>
    <property type="project" value="UniProtKB-UniRule"/>
</dbReference>
<dbReference type="GO" id="GO:0033204">
    <property type="term" value="F:ribonuclease P RNA binding"/>
    <property type="evidence" value="ECO:0007669"/>
    <property type="project" value="InterPro"/>
</dbReference>
<dbReference type="GO" id="GO:0006364">
    <property type="term" value="P:rRNA processing"/>
    <property type="evidence" value="ECO:0007669"/>
    <property type="project" value="TreeGrafter"/>
</dbReference>
<dbReference type="GO" id="GO:0001682">
    <property type="term" value="P:tRNA 5'-leader removal"/>
    <property type="evidence" value="ECO:0007669"/>
    <property type="project" value="UniProtKB-UniRule"/>
</dbReference>
<dbReference type="DisProt" id="DP00382"/>
<dbReference type="Gene3D" id="2.30.30.210">
    <property type="entry name" value="Ribonuclease P/MRP, subunit p29"/>
    <property type="match status" value="1"/>
</dbReference>
<dbReference type="HAMAP" id="MF_00754">
    <property type="entry name" value="RNase_P_1"/>
    <property type="match status" value="1"/>
</dbReference>
<dbReference type="InterPro" id="IPR016848">
    <property type="entry name" value="RNase_P/MRP_Rpp29-subunit"/>
</dbReference>
<dbReference type="InterPro" id="IPR036980">
    <property type="entry name" value="RNase_P/MRP_Rpp29_sf"/>
</dbReference>
<dbReference type="InterPro" id="IPR023538">
    <property type="entry name" value="RNP1"/>
</dbReference>
<dbReference type="InterPro" id="IPR023534">
    <property type="entry name" value="Rof/RNase_P-like"/>
</dbReference>
<dbReference type="InterPro" id="IPR002730">
    <property type="entry name" value="Rpp29/RNP1"/>
</dbReference>
<dbReference type="PANTHER" id="PTHR13348:SF0">
    <property type="entry name" value="RIBONUCLEASE P PROTEIN SUBUNIT P29"/>
    <property type="match status" value="1"/>
</dbReference>
<dbReference type="PANTHER" id="PTHR13348">
    <property type="entry name" value="RIBONUCLEASE P SUBUNIT P29"/>
    <property type="match status" value="1"/>
</dbReference>
<dbReference type="Pfam" id="PF01868">
    <property type="entry name" value="RNase_P-MRP_p29"/>
    <property type="match status" value="1"/>
</dbReference>
<dbReference type="SMART" id="SM00538">
    <property type="entry name" value="POP4"/>
    <property type="match status" value="1"/>
</dbReference>
<dbReference type="SUPFAM" id="SSF101744">
    <property type="entry name" value="Rof/RNase P subunit-like"/>
    <property type="match status" value="1"/>
</dbReference>
<keyword id="KW-0002">3D-structure</keyword>
<keyword id="KW-0963">Cytoplasm</keyword>
<keyword id="KW-0255">Endonuclease</keyword>
<keyword id="KW-0378">Hydrolase</keyword>
<keyword id="KW-0540">Nuclease</keyword>
<keyword id="KW-1185">Reference proteome</keyword>
<keyword id="KW-0819">tRNA processing</keyword>
<protein>
    <recommendedName>
        <fullName evidence="1">Ribonuclease P protein component 1</fullName>
        <shortName evidence="1">RNase P component 1</shortName>
        <ecNumber evidence="1">3.1.26.5</ecNumber>
    </recommendedName>
    <alternativeName>
        <fullName evidence="1">Rpp29</fullName>
    </alternativeName>
    <alternativeName>
        <fullName>aRpp29</fullName>
    </alternativeName>
</protein>
<name>RNP1_ARCFU</name>
<evidence type="ECO:0000255" key="1">
    <source>
        <dbReference type="HAMAP-Rule" id="MF_00754"/>
    </source>
</evidence>
<evidence type="ECO:0007829" key="2">
    <source>
        <dbReference type="PDB" id="1TS9"/>
    </source>
</evidence>
<sequence length="102" mass="11806">MRGRLQGVELIARDWIGLMVEVVESPNHSEVGIKGEVVDETQNTLKIMTEKGLKVVAKRGRTFRVWYKGKIMRIKGDLINFRPEDRIKRGLMMLKRAKGVWI</sequence>
<accession>O28362</accession>
<comment type="function">
    <text>Part of ribonuclease P, a protein complex that generates mature tRNA molecules by cleaving their 5'-ends.</text>
</comment>
<comment type="catalytic activity">
    <reaction evidence="1">
        <text>Endonucleolytic cleavage of RNA, removing 5'-extranucleotides from tRNA precursor.</text>
        <dbReference type="EC" id="3.1.26.5"/>
    </reaction>
</comment>
<comment type="subunit">
    <text evidence="1">Consists of a catalytic RNA component and at least 4-5 protein subunits.</text>
</comment>
<comment type="subcellular location">
    <subcellularLocation>
        <location evidence="1">Cytoplasm</location>
    </subcellularLocation>
</comment>
<comment type="similarity">
    <text evidence="1">Belongs to the eukaryotic/archaeal RNase P protein component 1 family.</text>
</comment>
<feature type="chain" id="PRO_0000128425" description="Ribonuclease P protein component 1">
    <location>
        <begin position="1"/>
        <end position="102"/>
    </location>
</feature>
<feature type="helix" evidence="2">
    <location>
        <begin position="6"/>
        <end position="12"/>
    </location>
</feature>
<feature type="strand" evidence="2">
    <location>
        <begin position="19"/>
        <end position="24"/>
    </location>
</feature>
<feature type="helix" evidence="2">
    <location>
        <begin position="28"/>
        <end position="30"/>
    </location>
</feature>
<feature type="strand" evidence="2">
    <location>
        <begin position="34"/>
        <end position="40"/>
    </location>
</feature>
<feature type="strand" evidence="2">
    <location>
        <begin position="42"/>
        <end position="57"/>
    </location>
</feature>
<feature type="strand" evidence="2">
    <location>
        <begin position="62"/>
        <end position="67"/>
    </location>
</feature>
<feature type="strand" evidence="2">
    <location>
        <begin position="70"/>
        <end position="75"/>
    </location>
</feature>
<feature type="helix" evidence="2">
    <location>
        <begin position="76"/>
        <end position="78"/>
    </location>
</feature>
<feature type="helix" evidence="2">
    <location>
        <begin position="83"/>
        <end position="96"/>
    </location>
</feature>
<feature type="turn" evidence="2">
    <location>
        <begin position="97"/>
        <end position="99"/>
    </location>
</feature>
<proteinExistence type="evidence at protein level"/>
<reference key="1">
    <citation type="journal article" date="1997" name="Nature">
        <title>The complete genome sequence of the hyperthermophilic, sulphate-reducing archaeon Archaeoglobus fulgidus.</title>
        <authorList>
            <person name="Klenk H.-P."/>
            <person name="Clayton R.A."/>
            <person name="Tomb J.-F."/>
            <person name="White O."/>
            <person name="Nelson K.E."/>
            <person name="Ketchum K.A."/>
            <person name="Dodson R.J."/>
            <person name="Gwinn M.L."/>
            <person name="Hickey E.K."/>
            <person name="Peterson J.D."/>
            <person name="Richardson D.L."/>
            <person name="Kerlavage A.R."/>
            <person name="Graham D.E."/>
            <person name="Kyrpides N.C."/>
            <person name="Fleischmann R.D."/>
            <person name="Quackenbush J."/>
            <person name="Lee N.H."/>
            <person name="Sutton G.G."/>
            <person name="Gill S.R."/>
            <person name="Kirkness E.F."/>
            <person name="Dougherty B.A."/>
            <person name="McKenney K."/>
            <person name="Adams M.D."/>
            <person name="Loftus B.J."/>
            <person name="Peterson S.N."/>
            <person name="Reich C.I."/>
            <person name="McNeil L.K."/>
            <person name="Badger J.H."/>
            <person name="Glodek A."/>
            <person name="Zhou L."/>
            <person name="Overbeek R."/>
            <person name="Gocayne J.D."/>
            <person name="Weidman J.F."/>
            <person name="McDonald L.A."/>
            <person name="Utterback T.R."/>
            <person name="Cotton M.D."/>
            <person name="Spriggs T."/>
            <person name="Artiach P."/>
            <person name="Kaine B.P."/>
            <person name="Sykes S.M."/>
            <person name="Sadow P.W."/>
            <person name="D'Andrea K.P."/>
            <person name="Bowman C."/>
            <person name="Fujii C."/>
            <person name="Garland S.A."/>
            <person name="Mason T.M."/>
            <person name="Olsen G.J."/>
            <person name="Fraser C.M."/>
            <person name="Smith H.O."/>
            <person name="Woese C.R."/>
            <person name="Venter J.C."/>
        </authorList>
    </citation>
    <scope>NUCLEOTIDE SEQUENCE [LARGE SCALE GENOMIC DNA]</scope>
    <source>
        <strain>ATCC 49558 / DSM 4304 / JCM 9628 / NBRC 100126 / VC-16</strain>
    </source>
</reference>
<reference key="2">
    <citation type="journal article" date="2003" name="Biochemistry">
        <title>NMR structure of an archaeal homologue of ribonuclease P protein Rpp29.</title>
        <authorList>
            <person name="Sidote D.J."/>
            <person name="Hoffman D.W."/>
        </authorList>
    </citation>
    <scope>CHARACTERIZATION</scope>
    <scope>STRUCTURE BY NMR</scope>
</reference>
<organism>
    <name type="scientific">Archaeoglobus fulgidus (strain ATCC 49558 / DSM 4304 / JCM 9628 / NBRC 100126 / VC-16)</name>
    <dbReference type="NCBI Taxonomy" id="224325"/>
    <lineage>
        <taxon>Archaea</taxon>
        <taxon>Methanobacteriati</taxon>
        <taxon>Methanobacteriota</taxon>
        <taxon>Archaeoglobi</taxon>
        <taxon>Archaeoglobales</taxon>
        <taxon>Archaeoglobaceae</taxon>
        <taxon>Archaeoglobus</taxon>
    </lineage>
</organism>